<keyword id="KW-0002">3D-structure</keyword>
<keyword id="KW-0186">Copper</keyword>
<keyword id="KW-0963">Cytoplasm</keyword>
<keyword id="KW-0903">Direct protein sequencing</keyword>
<keyword id="KW-0256">Endoplasmic reticulum</keyword>
<keyword id="KW-0378">Hydrolase</keyword>
<keyword id="KW-0379">Hydroxylation</keyword>
<keyword id="KW-0520">NAD</keyword>
<keyword id="KW-0539">Nucleus</keyword>
<keyword id="KW-0554">One-carbon metabolism</keyword>
<keyword id="KW-0597">Phosphoprotein</keyword>
<keyword id="KW-1185">Reference proteome</keyword>
<reference key="1">
    <citation type="journal article" date="1987" name="Proc. Natl. Acad. Sci. U.S.A.">
        <title>Amino acid sequence of S-adenosyl-L-homocysteine hydrolase from rat liver as derived from the cDNA sequence.</title>
        <authorList>
            <person name="Ogawa H."/>
            <person name="Gomi T."/>
            <person name="Mueckler M.M."/>
            <person name="Fujioka M."/>
            <person name="Backlund P.S. Jr."/>
            <person name="Aksamit R.R."/>
            <person name="Unson C.G."/>
            <person name="Cantoni G.L."/>
        </authorList>
    </citation>
    <scope>NUCLEOTIDE SEQUENCE [MRNA]</scope>
    <scope>PARTIAL PROTEIN SEQUENCE</scope>
</reference>
<reference key="2">
    <citation type="journal article" date="1995" name="Eur. J. Biochem.">
        <title>The gene and pseudogenes of rat S-adenosyl-L-homocysteine hydrolase.</title>
        <authorList>
            <person name="Merta A."/>
            <person name="Aksamit R.R."/>
            <person name="Kasir J."/>
            <person name="Cantoni G.L."/>
        </authorList>
    </citation>
    <scope>NUCLEOTIDE SEQUENCE [GENOMIC DNA]</scope>
    <source>
        <strain>Fischer 344</strain>
    </source>
</reference>
<reference key="3">
    <citation type="journal article" date="1986" name="J. Biol. Chem.">
        <title>S-adenosylhomocysteinase from rat liver. Amino acid sequences of the peptides containing active site cysteine residues modified by treatment with 5'-p-fluorosulfonylbenzoyladenosine.</title>
        <authorList>
            <person name="Gomi T."/>
            <person name="Ogawa H."/>
            <person name="Fujioka M."/>
        </authorList>
    </citation>
    <scope>PROTEIN SEQUENCE OF 76-94</scope>
</reference>
<reference key="4">
    <citation type="submission" date="2007-04" db="UniProtKB">
        <authorList>
            <person name="Lubec G."/>
            <person name="Afjehi-Sadat L."/>
            <person name="Diao W."/>
        </authorList>
    </citation>
    <scope>PROTEIN SEQUENCE OF 143-151 AND 268-285</scope>
    <scope>IDENTIFICATION BY MASS SPECTROMETRY</scope>
    <source>
        <strain>Sprague-Dawley</strain>
        <tissue>Hippocampus</tissue>
        <tissue>Spinal cord</tissue>
    </source>
</reference>
<reference key="5">
    <citation type="journal article" date="1999" name="Biochemistry">
        <title>Crystal structure of S-adenosylhomocysteine hydrolase from rat liver.</title>
        <authorList>
            <person name="Hu Y."/>
            <person name="Komoto J."/>
            <person name="Huang Y."/>
            <person name="Gomi T."/>
            <person name="Ogawa H."/>
            <person name="Takata Y."/>
            <person name="Fujioka M."/>
            <person name="Takusagawa F."/>
        </authorList>
    </citation>
    <scope>X-RAY CRYSTALLOGRAPHY (2.8 ANGSTROMS) IN COMPLEX WITH NAD</scope>
    <scope>COFACTOR</scope>
    <scope>SUBUNIT</scope>
    <source>
        <tissue>Liver</tissue>
    </source>
</reference>
<reference key="6">
    <citation type="journal article" date="2000" name="J. Biol. Chem.">
        <title>Effects of site-directed mutagenesis on structure and function of recombinant rat liver S-adenosylhomocysteine hydrolase. Crystal structure of D244E mutant enzyme.</title>
        <authorList>
            <person name="Komoto J."/>
            <person name="Huang Y."/>
            <person name="Gomi T."/>
            <person name="Ogawa H."/>
            <person name="Takata Y."/>
            <person name="Fujioka M."/>
            <person name="Takusagawa F."/>
        </authorList>
    </citation>
    <scope>X-RAY CRYSTALLOGRAPHY (2.8 ANGSTROMS) OF MUTANT GLU-245</scope>
</reference>
<reference key="7">
    <citation type="journal article" date="2002" name="J. Biol. Chem.">
        <title>Inhibition of S-adenosylhomocysteine hydrolase by acyclic sugar adenosine analogue D-eritadenine. Crystal structure of S-adenosylhomocysteine hydrolase complexed with D-eritadenine.</title>
        <authorList>
            <person name="Huang Y."/>
            <person name="Komoto J."/>
            <person name="Takata Y."/>
            <person name="Powell D.R."/>
            <person name="Gomi T."/>
            <person name="Ogawa H."/>
            <person name="Fujioka M."/>
            <person name="Takusagawa F."/>
        </authorList>
    </citation>
    <scope>X-RAY CRYSTALLOGRAPHY (3.0 ANGSTROMS) IN COMPLEX WITH INHIBITOR</scope>
    <scope>SUBUNIT</scope>
</reference>
<reference key="8">
    <citation type="journal article" date="2002" name="J. Biol. Chem.">
        <title>Catalytic mechanism of S-adenosylhomocysteine hydrolase. Site-directed mutagenesis of Asp-130, Lys-185, Asp-189, and Asn-190.</title>
        <authorList>
            <person name="Takata Y."/>
            <person name="Yamada T."/>
            <person name="Huang Y."/>
            <person name="Komoto J."/>
            <person name="Gomi T."/>
            <person name="Ogawa H."/>
            <person name="Fujioka M."/>
            <person name="Takusagawa F."/>
        </authorList>
    </citation>
    <scope>X-RAY CRYSTALLOGRAPHY (2.8 ANGSTROMS)</scope>
    <scope>MUTAGENESIS OF ASP-131; LYS-186; ASP-190 AND ASN-191</scope>
    <scope>FUNCTION</scope>
    <scope>COFACTOR</scope>
    <scope>PATHWAY</scope>
    <scope>CATALYTIC ACTIVITY</scope>
</reference>
<accession>P10760</accession>
<name>SAHH_RAT</name>
<proteinExistence type="evidence at protein level"/>
<comment type="function">
    <text evidence="2 6">Catalyzes the hydrolysis of S-adenosyl-L-homocysteine to form adenosine and homocysteine (PubMed:11927587). Binds copper ions (By similarity).</text>
</comment>
<comment type="catalytic activity">
    <reaction evidence="6">
        <text>S-adenosyl-L-homocysteine + H2O = L-homocysteine + adenosine</text>
        <dbReference type="Rhea" id="RHEA:21708"/>
        <dbReference type="ChEBI" id="CHEBI:15377"/>
        <dbReference type="ChEBI" id="CHEBI:16335"/>
        <dbReference type="ChEBI" id="CHEBI:57856"/>
        <dbReference type="ChEBI" id="CHEBI:58199"/>
        <dbReference type="EC" id="3.13.2.1"/>
    </reaction>
    <physiologicalReaction direction="left-to-right" evidence="6">
        <dbReference type="Rhea" id="RHEA:21709"/>
    </physiologicalReaction>
</comment>
<comment type="cofactor">
    <cofactor evidence="3 4 5 6 11 12 13 14 15 16 17">
        <name>NAD(+)</name>
        <dbReference type="ChEBI" id="CHEBI:57540"/>
    </cofactor>
    <text evidence="3 4 5 6 11 12 13 14 15 16 17">Binds 1 NAD(+) per subunit.</text>
</comment>
<comment type="pathway">
    <text evidence="10">Amino-acid biosynthesis; L-homocysteine biosynthesis; L-homocysteine from S-adenosyl-L-homocysteine: step 1/1.</text>
</comment>
<comment type="subunit">
    <text evidence="1 3 5">Homotetramer. Interaction with AHCYL1 (By similarity).</text>
</comment>
<comment type="subcellular location">
    <subcellularLocation>
        <location evidence="1">Cytoplasm</location>
    </subcellularLocation>
    <subcellularLocation>
        <location evidence="1">Melanosome</location>
    </subcellularLocation>
    <subcellularLocation>
        <location evidence="1">Nucleus</location>
    </subcellularLocation>
    <subcellularLocation>
        <location evidence="1">Endoplasmic reticulum</location>
    </subcellularLocation>
</comment>
<comment type="similarity">
    <text evidence="9">Belongs to the adenosylhomocysteinase family.</text>
</comment>
<gene>
    <name type="primary">Ahcy</name>
</gene>
<protein>
    <recommendedName>
        <fullName>Adenosylhomocysteinase</fullName>
        <shortName evidence="7 8">AdoHcyase</shortName>
        <ecNumber evidence="6">3.13.2.1</ecNumber>
    </recommendedName>
    <alternativeName>
        <fullName evidence="7">S-adenosyl-L-homocysteine hydrolase</fullName>
    </alternativeName>
</protein>
<dbReference type="EC" id="3.13.2.1" evidence="6"/>
<dbReference type="EMBL" id="M15185">
    <property type="protein sequence ID" value="AAA40705.1"/>
    <property type="molecule type" value="mRNA"/>
</dbReference>
<dbReference type="EMBL" id="U14937">
    <property type="protein sequence ID" value="AAA92043.1"/>
    <property type="molecule type" value="Genomic_DNA"/>
</dbReference>
<dbReference type="PIR" id="A26583">
    <property type="entry name" value="A26583"/>
</dbReference>
<dbReference type="RefSeq" id="NP_058897.1">
    <property type="nucleotide sequence ID" value="NM_017201.2"/>
</dbReference>
<dbReference type="PDB" id="1B3R">
    <property type="method" value="X-ray"/>
    <property type="resolution" value="2.80 A"/>
    <property type="chains" value="A/B/C/D=2-432"/>
</dbReference>
<dbReference type="PDB" id="1D4F">
    <property type="method" value="X-ray"/>
    <property type="resolution" value="2.80 A"/>
    <property type="chains" value="A/B/C/D=2-432"/>
</dbReference>
<dbReference type="PDB" id="1K0U">
    <property type="method" value="X-ray"/>
    <property type="resolution" value="3.00 A"/>
    <property type="chains" value="A/B/C/D/E/F/G/H=2-432"/>
</dbReference>
<dbReference type="PDB" id="1KY4">
    <property type="method" value="X-ray"/>
    <property type="resolution" value="2.80 A"/>
    <property type="chains" value="A/B/C/D=2-432"/>
</dbReference>
<dbReference type="PDB" id="1KY5">
    <property type="method" value="X-ray"/>
    <property type="resolution" value="2.80 A"/>
    <property type="chains" value="A/B/C/D=2-432"/>
</dbReference>
<dbReference type="PDB" id="1XWF">
    <property type="method" value="X-ray"/>
    <property type="resolution" value="2.80 A"/>
    <property type="chains" value="A/B/C/D=2-432"/>
</dbReference>
<dbReference type="PDB" id="2H5L">
    <property type="method" value="X-ray"/>
    <property type="resolution" value="2.80 A"/>
    <property type="chains" value="A/B/C/D/E/F/G/H=2-432"/>
</dbReference>
<dbReference type="PDBsum" id="1B3R"/>
<dbReference type="PDBsum" id="1D4F"/>
<dbReference type="PDBsum" id="1K0U"/>
<dbReference type="PDBsum" id="1KY4"/>
<dbReference type="PDBsum" id="1KY5"/>
<dbReference type="PDBsum" id="1XWF"/>
<dbReference type="PDBsum" id="2H5L"/>
<dbReference type="SMR" id="P10760"/>
<dbReference type="BioGRID" id="248089">
    <property type="interactions" value="1"/>
</dbReference>
<dbReference type="FunCoup" id="P10760">
    <property type="interactions" value="2642"/>
</dbReference>
<dbReference type="IntAct" id="P10760">
    <property type="interactions" value="1"/>
</dbReference>
<dbReference type="STRING" id="10116.ENSRNOP00000024310"/>
<dbReference type="BindingDB" id="P10760"/>
<dbReference type="ChEMBL" id="CHEMBL3118"/>
<dbReference type="iPTMnet" id="P10760"/>
<dbReference type="PhosphoSitePlus" id="P10760"/>
<dbReference type="jPOST" id="P10760"/>
<dbReference type="PaxDb" id="10116-ENSRNOP00000024310"/>
<dbReference type="Ensembl" id="ENSRNOT00000024310.4">
    <property type="protein sequence ID" value="ENSRNOP00000024310.1"/>
    <property type="gene ID" value="ENSRNOG00000017777.4"/>
</dbReference>
<dbReference type="GeneID" id="29443"/>
<dbReference type="KEGG" id="rno:29443"/>
<dbReference type="UCSC" id="RGD:69260">
    <property type="organism name" value="rat"/>
</dbReference>
<dbReference type="AGR" id="RGD:69260"/>
<dbReference type="CTD" id="191"/>
<dbReference type="RGD" id="69260">
    <property type="gene designation" value="Ahcy"/>
</dbReference>
<dbReference type="eggNOG" id="KOG1370">
    <property type="taxonomic scope" value="Eukaryota"/>
</dbReference>
<dbReference type="GeneTree" id="ENSGT00950000182981"/>
<dbReference type="HOGENOM" id="CLU_025194_2_1_1"/>
<dbReference type="InParanoid" id="P10760"/>
<dbReference type="OMA" id="YIGVTVE"/>
<dbReference type="OrthoDB" id="10007170at2759"/>
<dbReference type="PhylomeDB" id="P10760"/>
<dbReference type="TreeFam" id="TF300415"/>
<dbReference type="BioCyc" id="MetaCyc:MONOMER-8582"/>
<dbReference type="BRENDA" id="3.3.1.1">
    <property type="organism ID" value="5301"/>
</dbReference>
<dbReference type="Reactome" id="R-RNO-156581">
    <property type="pathway name" value="Methylation"/>
</dbReference>
<dbReference type="Reactome" id="R-RNO-1614635">
    <property type="pathway name" value="Sulfur amino acid metabolism"/>
</dbReference>
<dbReference type="SABIO-RK" id="P10760"/>
<dbReference type="UniPathway" id="UPA00314">
    <property type="reaction ID" value="UER00076"/>
</dbReference>
<dbReference type="EvolutionaryTrace" id="P10760"/>
<dbReference type="PRO" id="PR:P10760"/>
<dbReference type="Proteomes" id="UP000002494">
    <property type="component" value="Chromosome 3"/>
</dbReference>
<dbReference type="Bgee" id="ENSRNOG00000017777">
    <property type="expression patterns" value="Expressed in liver and 19 other cell types or tissues"/>
</dbReference>
<dbReference type="GO" id="GO:0005829">
    <property type="term" value="C:cytosol"/>
    <property type="evidence" value="ECO:0000266"/>
    <property type="project" value="RGD"/>
</dbReference>
<dbReference type="GO" id="GO:0005783">
    <property type="term" value="C:endoplasmic reticulum"/>
    <property type="evidence" value="ECO:0007669"/>
    <property type="project" value="UniProtKB-SubCell"/>
</dbReference>
<dbReference type="GO" id="GO:0042470">
    <property type="term" value="C:melanosome"/>
    <property type="evidence" value="ECO:0007669"/>
    <property type="project" value="UniProtKB-SubCell"/>
</dbReference>
<dbReference type="GO" id="GO:0005634">
    <property type="term" value="C:nucleus"/>
    <property type="evidence" value="ECO:0007669"/>
    <property type="project" value="UniProtKB-SubCell"/>
</dbReference>
<dbReference type="GO" id="GO:0004013">
    <property type="term" value="F:adenosylhomocysteinase activity"/>
    <property type="evidence" value="ECO:0000314"/>
    <property type="project" value="UniProtKB"/>
</dbReference>
<dbReference type="GO" id="GO:0098604">
    <property type="term" value="F:adenosylselenohomocysteinase activity"/>
    <property type="evidence" value="ECO:0000304"/>
    <property type="project" value="Reactome"/>
</dbReference>
<dbReference type="GO" id="GO:0030554">
    <property type="term" value="F:adenyl nucleotide binding"/>
    <property type="evidence" value="ECO:0000314"/>
    <property type="project" value="RGD"/>
</dbReference>
<dbReference type="GO" id="GO:0005507">
    <property type="term" value="F:copper ion binding"/>
    <property type="evidence" value="ECO:0000266"/>
    <property type="project" value="RGD"/>
</dbReference>
<dbReference type="GO" id="GO:0042802">
    <property type="term" value="F:identical protein binding"/>
    <property type="evidence" value="ECO:0000314"/>
    <property type="project" value="RGD"/>
</dbReference>
<dbReference type="GO" id="GO:0051287">
    <property type="term" value="F:NAD binding"/>
    <property type="evidence" value="ECO:0000314"/>
    <property type="project" value="RGD"/>
</dbReference>
<dbReference type="GO" id="GO:0002439">
    <property type="term" value="P:chronic inflammatory response to antigenic stimulus"/>
    <property type="evidence" value="ECO:0000315"/>
    <property type="project" value="RGD"/>
</dbReference>
<dbReference type="GO" id="GO:0042745">
    <property type="term" value="P:circadian sleep/wake cycle"/>
    <property type="evidence" value="ECO:0000314"/>
    <property type="project" value="RGD"/>
</dbReference>
<dbReference type="GO" id="GO:0006730">
    <property type="term" value="P:one-carbon metabolic process"/>
    <property type="evidence" value="ECO:0007669"/>
    <property type="project" value="UniProtKB-KW"/>
</dbReference>
<dbReference type="GO" id="GO:0001666">
    <property type="term" value="P:response to hypoxia"/>
    <property type="evidence" value="ECO:0000270"/>
    <property type="project" value="RGD"/>
</dbReference>
<dbReference type="GO" id="GO:0007584">
    <property type="term" value="P:response to nutrient"/>
    <property type="evidence" value="ECO:0000314"/>
    <property type="project" value="RGD"/>
</dbReference>
<dbReference type="GO" id="GO:0019510">
    <property type="term" value="P:S-adenosylhomocysteine catabolic process"/>
    <property type="evidence" value="ECO:0000314"/>
    <property type="project" value="RGD"/>
</dbReference>
<dbReference type="GO" id="GO:0033353">
    <property type="term" value="P:S-adenosylmethionine cycle"/>
    <property type="evidence" value="ECO:0000318"/>
    <property type="project" value="GO_Central"/>
</dbReference>
<dbReference type="CDD" id="cd00401">
    <property type="entry name" value="SAHH"/>
    <property type="match status" value="1"/>
</dbReference>
<dbReference type="FunFam" id="3.40.50.1480:FF:000004">
    <property type="entry name" value="Adenosylhomocysteinase"/>
    <property type="match status" value="1"/>
</dbReference>
<dbReference type="FunFam" id="3.40.50.720:FF:000004">
    <property type="entry name" value="Adenosylhomocysteinase"/>
    <property type="match status" value="1"/>
</dbReference>
<dbReference type="Gene3D" id="3.40.50.1480">
    <property type="entry name" value="Adenosylhomocysteinase-like"/>
    <property type="match status" value="2"/>
</dbReference>
<dbReference type="Gene3D" id="3.40.50.720">
    <property type="entry name" value="NAD(P)-binding Rossmann-like Domain"/>
    <property type="match status" value="1"/>
</dbReference>
<dbReference type="HAMAP" id="MF_00563">
    <property type="entry name" value="AdoHcyase"/>
    <property type="match status" value="1"/>
</dbReference>
<dbReference type="InterPro" id="IPR042172">
    <property type="entry name" value="Adenosylhomocyst_ase-like_sf"/>
</dbReference>
<dbReference type="InterPro" id="IPR000043">
    <property type="entry name" value="Adenosylhomocysteinase-like"/>
</dbReference>
<dbReference type="InterPro" id="IPR015878">
    <property type="entry name" value="Ado_hCys_hydrolase_NAD-bd"/>
</dbReference>
<dbReference type="InterPro" id="IPR036291">
    <property type="entry name" value="NAD(P)-bd_dom_sf"/>
</dbReference>
<dbReference type="InterPro" id="IPR020082">
    <property type="entry name" value="S-Ado-L-homoCys_hydrolase_CS"/>
</dbReference>
<dbReference type="NCBIfam" id="TIGR00936">
    <property type="entry name" value="ahcY"/>
    <property type="match status" value="1"/>
</dbReference>
<dbReference type="NCBIfam" id="NF004005">
    <property type="entry name" value="PRK05476.2-3"/>
    <property type="match status" value="1"/>
</dbReference>
<dbReference type="PANTHER" id="PTHR23420">
    <property type="entry name" value="ADENOSYLHOMOCYSTEINASE"/>
    <property type="match status" value="1"/>
</dbReference>
<dbReference type="PANTHER" id="PTHR23420:SF0">
    <property type="entry name" value="ADENOSYLHOMOCYSTEINASE"/>
    <property type="match status" value="1"/>
</dbReference>
<dbReference type="Pfam" id="PF05221">
    <property type="entry name" value="AdoHcyase"/>
    <property type="match status" value="1"/>
</dbReference>
<dbReference type="Pfam" id="PF00670">
    <property type="entry name" value="AdoHcyase_NAD"/>
    <property type="match status" value="1"/>
</dbReference>
<dbReference type="PIRSF" id="PIRSF001109">
    <property type="entry name" value="Ad_hcy_hydrolase"/>
    <property type="match status" value="1"/>
</dbReference>
<dbReference type="SMART" id="SM00996">
    <property type="entry name" value="AdoHcyase"/>
    <property type="match status" value="1"/>
</dbReference>
<dbReference type="SMART" id="SM00997">
    <property type="entry name" value="AdoHcyase_NAD"/>
    <property type="match status" value="1"/>
</dbReference>
<dbReference type="SUPFAM" id="SSF52283">
    <property type="entry name" value="Formate/glycerate dehydrogenase catalytic domain-like"/>
    <property type="match status" value="1"/>
</dbReference>
<dbReference type="SUPFAM" id="SSF51735">
    <property type="entry name" value="NAD(P)-binding Rossmann-fold domains"/>
    <property type="match status" value="1"/>
</dbReference>
<dbReference type="PROSITE" id="PS00738">
    <property type="entry name" value="ADOHCYASE_1"/>
    <property type="match status" value="1"/>
</dbReference>
<dbReference type="PROSITE" id="PS00739">
    <property type="entry name" value="ADOHCYASE_2"/>
    <property type="match status" value="1"/>
</dbReference>
<feature type="chain" id="PRO_0000116905" description="Adenosylhomocysteinase">
    <location>
        <begin position="1"/>
        <end position="432"/>
    </location>
</feature>
<feature type="binding site" evidence="5">
    <location>
        <position position="57"/>
    </location>
    <ligand>
        <name>substrate</name>
    </ligand>
</feature>
<feature type="binding site" evidence="6">
    <location>
        <position position="131"/>
    </location>
    <ligand>
        <name>substrate</name>
    </ligand>
</feature>
<feature type="binding site" evidence="5">
    <location>
        <position position="156"/>
    </location>
    <ligand>
        <name>substrate</name>
    </ligand>
</feature>
<feature type="binding site" evidence="4 5 6 12 13 15 17">
    <location>
        <begin position="157"/>
        <end position="159"/>
    </location>
    <ligand>
        <name>NAD(+)</name>
        <dbReference type="ChEBI" id="CHEBI:57540"/>
    </ligand>
</feature>
<feature type="binding site" evidence="5 6">
    <location>
        <position position="186"/>
    </location>
    <ligand>
        <name>substrate</name>
    </ligand>
</feature>
<feature type="binding site" evidence="5 6">
    <location>
        <position position="190"/>
    </location>
    <ligand>
        <name>substrate</name>
    </ligand>
</feature>
<feature type="binding site" evidence="3">
    <location>
        <begin position="222"/>
        <end position="227"/>
    </location>
    <ligand>
        <name>NAD(+)</name>
        <dbReference type="ChEBI" id="CHEBI:57540"/>
    </ligand>
</feature>
<feature type="binding site" evidence="3">
    <location>
        <position position="243"/>
    </location>
    <ligand>
        <name>NAD(+)</name>
        <dbReference type="ChEBI" id="CHEBI:57540"/>
    </ligand>
</feature>
<feature type="binding site" evidence="4 5 6 12 13 14 16 17">
    <location>
        <position position="248"/>
    </location>
    <ligand>
        <name>NAD(+)</name>
        <dbReference type="ChEBI" id="CHEBI:57540"/>
    </ligand>
</feature>
<feature type="binding site" evidence="3 4 5 6 11 12 13 14 15 16 17">
    <location>
        <begin position="299"/>
        <end position="301"/>
    </location>
    <ligand>
        <name>NAD(+)</name>
        <dbReference type="ChEBI" id="CHEBI:57540"/>
    </ligand>
</feature>
<feature type="binding site" evidence="3 4 5 6 11 12 13 14 15 16 17">
    <location>
        <position position="346"/>
    </location>
    <ligand>
        <name>NAD(+)</name>
        <dbReference type="ChEBI" id="CHEBI:57540"/>
    </ligand>
</feature>
<feature type="binding site" evidence="3 4 5 11 12 13 16 17">
    <location>
        <position position="353"/>
    </location>
    <ligand>
        <name>NAD(+)</name>
        <dbReference type="ChEBI" id="CHEBI:57540"/>
    </ligand>
</feature>
<feature type="binding site" evidence="3">
    <location>
        <begin position="426"/>
        <end position="430"/>
    </location>
    <ligand>
        <name>NAD(+)</name>
        <dbReference type="ChEBI" id="CHEBI:57540"/>
    </ligand>
</feature>
<feature type="binding site" evidence="3 5 6 11 13 14 15 16 17">
    <location>
        <position position="426"/>
    </location>
    <ligand>
        <name>NAD(+)</name>
        <dbReference type="ChEBI" id="CHEBI:57540"/>
    </ligand>
</feature>
<feature type="binding site" evidence="3 4 5 6 11 12 13 14 15 16 17">
    <location>
        <position position="430"/>
    </location>
    <ligand>
        <name>NAD(+)</name>
        <dbReference type="ChEBI" id="CHEBI:57540"/>
    </ligand>
</feature>
<feature type="modified residue" description="Phosphoserine" evidence="1">
    <location>
        <position position="183"/>
    </location>
</feature>
<feature type="modified residue" description="N6-(2-hydroxyisobutyryl)lysine" evidence="1">
    <location>
        <position position="186"/>
    </location>
</feature>
<feature type="modified residue" description="Phosphotyrosine" evidence="2">
    <location>
        <position position="193"/>
    </location>
</feature>
<feature type="mutagenesis site" description="Strongly reduces S-adenosyl-L-homocysteine hydrolase activity." evidence="6">
    <original>D</original>
    <variation>N</variation>
    <location>
        <position position="131"/>
    </location>
</feature>
<feature type="mutagenesis site" description="Strongly reduces S-adenosyl-L-homocysteine hydrolase activity." evidence="6">
    <original>K</original>
    <variation>N</variation>
    <location>
        <position position="186"/>
    </location>
</feature>
<feature type="mutagenesis site" description="Strongly reduces S-adenosyl-L-homocysteine hydrolase activity." evidence="6">
    <original>D</original>
    <variation>N</variation>
    <location>
        <position position="190"/>
    </location>
</feature>
<feature type="mutagenesis site" description="Strongly reduces S-adenosyl-L-homocysteine hydrolase activity." evidence="6">
    <original>N</original>
    <variation>S</variation>
    <location>
        <position position="191"/>
    </location>
</feature>
<feature type="mutagenesis site" description="Changes active site geometry and alters affinity for NAD.">
    <original>D</original>
    <variation>E</variation>
    <location>
        <position position="245"/>
    </location>
</feature>
<feature type="strand" evidence="18">
    <location>
        <begin position="8"/>
        <end position="10"/>
    </location>
</feature>
<feature type="turn" evidence="18">
    <location>
        <begin position="12"/>
        <end position="14"/>
    </location>
</feature>
<feature type="helix" evidence="18">
    <location>
        <begin position="15"/>
        <end position="25"/>
    </location>
</feature>
<feature type="helix" evidence="18">
    <location>
        <begin position="26"/>
        <end position="28"/>
    </location>
</feature>
<feature type="helix" evidence="18">
    <location>
        <begin position="30"/>
        <end position="39"/>
    </location>
</feature>
<feature type="turn" evidence="18">
    <location>
        <begin position="40"/>
        <end position="42"/>
    </location>
</feature>
<feature type="turn" evidence="18">
    <location>
        <begin position="44"/>
        <end position="47"/>
    </location>
</feature>
<feature type="strand" evidence="18">
    <location>
        <begin position="49"/>
        <end position="54"/>
    </location>
</feature>
<feature type="helix" evidence="18">
    <location>
        <begin position="58"/>
        <end position="69"/>
    </location>
</feature>
<feature type="strand" evidence="18">
    <location>
        <begin position="73"/>
        <end position="77"/>
    </location>
</feature>
<feature type="turn" evidence="18">
    <location>
        <begin position="81"/>
        <end position="83"/>
    </location>
</feature>
<feature type="helix" evidence="18">
    <location>
        <begin position="86"/>
        <end position="94"/>
    </location>
</feature>
<feature type="strand" evidence="18">
    <location>
        <begin position="99"/>
        <end position="101"/>
    </location>
</feature>
<feature type="helix" evidence="18">
    <location>
        <begin position="107"/>
        <end position="116"/>
    </location>
</feature>
<feature type="strand" evidence="19">
    <location>
        <begin position="118"/>
        <end position="120"/>
    </location>
</feature>
<feature type="strand" evidence="18">
    <location>
        <begin position="127"/>
        <end position="133"/>
    </location>
</feature>
<feature type="helix" evidence="18">
    <location>
        <begin position="134"/>
        <end position="142"/>
    </location>
</feature>
<feature type="helix" evidence="18">
    <location>
        <begin position="144"/>
        <end position="147"/>
    </location>
</feature>
<feature type="strand" evidence="18">
    <location>
        <begin position="152"/>
        <end position="155"/>
    </location>
</feature>
<feature type="helix" evidence="18">
    <location>
        <begin position="158"/>
        <end position="169"/>
    </location>
</feature>
<feature type="strand" evidence="18">
    <location>
        <begin position="177"/>
        <end position="179"/>
    </location>
</feature>
<feature type="helix" evidence="20">
    <location>
        <begin position="180"/>
        <end position="182"/>
    </location>
</feature>
<feature type="helix" evidence="18">
    <location>
        <begin position="184"/>
        <end position="190"/>
    </location>
</feature>
<feature type="helix" evidence="18">
    <location>
        <begin position="192"/>
        <end position="207"/>
    </location>
</feature>
<feature type="strand" evidence="18">
    <location>
        <begin position="215"/>
        <end position="219"/>
    </location>
</feature>
<feature type="helix" evidence="18">
    <location>
        <begin position="223"/>
        <end position="234"/>
    </location>
</feature>
<feature type="strand" evidence="18">
    <location>
        <begin position="238"/>
        <end position="242"/>
    </location>
</feature>
<feature type="helix" evidence="18">
    <location>
        <begin position="246"/>
        <end position="253"/>
    </location>
</feature>
<feature type="turn" evidence="18">
    <location>
        <begin position="254"/>
        <end position="256"/>
    </location>
</feature>
<feature type="strand" evidence="18">
    <location>
        <begin position="258"/>
        <end position="260"/>
    </location>
</feature>
<feature type="helix" evidence="18">
    <location>
        <begin position="262"/>
        <end position="265"/>
    </location>
</feature>
<feature type="turn" evidence="18">
    <location>
        <begin position="266"/>
        <end position="268"/>
    </location>
</feature>
<feature type="strand" evidence="18">
    <location>
        <begin position="270"/>
        <end position="274"/>
    </location>
</feature>
<feature type="strand" evidence="18">
    <location>
        <begin position="277"/>
        <end position="279"/>
    </location>
</feature>
<feature type="helix" evidence="18">
    <location>
        <begin position="284"/>
        <end position="287"/>
    </location>
</feature>
<feature type="strand" evidence="18">
    <location>
        <begin position="294"/>
        <end position="298"/>
    </location>
</feature>
<feature type="turn" evidence="18">
    <location>
        <begin position="302"/>
        <end position="304"/>
    </location>
</feature>
<feature type="helix" evidence="18">
    <location>
        <begin position="308"/>
        <end position="314"/>
    </location>
</feature>
<feature type="strand" evidence="18">
    <location>
        <begin position="315"/>
        <end position="322"/>
    </location>
</feature>
<feature type="strand" evidence="18">
    <location>
        <begin position="325"/>
        <end position="330"/>
    </location>
</feature>
<feature type="strand" evidence="18">
    <location>
        <begin position="335"/>
        <end position="339"/>
    </location>
</feature>
<feature type="helix" evidence="18">
    <location>
        <begin position="340"/>
        <end position="342"/>
    </location>
</feature>
<feature type="helix" evidence="18">
    <location>
        <begin position="345"/>
        <end position="349"/>
    </location>
</feature>
<feature type="helix" evidence="18">
    <location>
        <begin position="355"/>
        <end position="374"/>
    </location>
</feature>
<feature type="turn" evidence="18">
    <location>
        <begin position="376"/>
        <end position="378"/>
    </location>
</feature>
<feature type="strand" evidence="18">
    <location>
        <begin position="381"/>
        <end position="385"/>
    </location>
</feature>
<feature type="helix" evidence="18">
    <location>
        <begin position="388"/>
        <end position="398"/>
    </location>
</feature>
<feature type="turn" evidence="18">
    <location>
        <begin position="399"/>
        <end position="402"/>
    </location>
</feature>
<feature type="helix" evidence="18">
    <location>
        <begin position="411"/>
        <end position="417"/>
    </location>
</feature>
<feature type="strand" evidence="18">
    <location>
        <begin position="421"/>
        <end position="423"/>
    </location>
</feature>
<sequence length="432" mass="47538">MADKLPYKVADIGLAAWGRKALDIAENEMPGLMRMREMYSASKPLKGARIAGCLHMTVETAVLIETLVALGAEVRWSSCNIFSTQDHAAAAIAKAGIPVFAWKGETDEEYLWCIEQTLHFKDGPLNMILDDGGDLTNLIHTKHPQLLSGIRGISEETTTGVHNLYKMMANGILKVPAINVNDSVTKSKFDNLYGCRESLIDGIKRATDVMIAGKVAVVAGYGDVGKGCAQALRGFGARVIITEIDPINALQAAMEGYEVTTMDEACKEGNIFVTTTGCVDIILGRHFEQMKDDAIVCNIGHFDVEIDVKWLNENAVEKVNIKPQVDRYLLKNGHRIILLAEGRLVNLGCAMGHPSFVMSNSFTNQVMAQIELWTHPDKYPVGVHFLPKKLDEAVAEAHLGKLNVKLTKLTEKQAQYLGMPINGPFKPDHYRY</sequence>
<evidence type="ECO:0000250" key="1">
    <source>
        <dbReference type="UniProtKB" id="P23526"/>
    </source>
</evidence>
<evidence type="ECO:0000250" key="2">
    <source>
        <dbReference type="UniProtKB" id="P50247"/>
    </source>
</evidence>
<evidence type="ECO:0000269" key="3">
    <source>
    </source>
</evidence>
<evidence type="ECO:0000269" key="4">
    <source>
    </source>
</evidence>
<evidence type="ECO:0000269" key="5">
    <source>
    </source>
</evidence>
<evidence type="ECO:0000269" key="6">
    <source>
    </source>
</evidence>
<evidence type="ECO:0000303" key="7">
    <source>
    </source>
</evidence>
<evidence type="ECO:0000303" key="8">
    <source>
    </source>
</evidence>
<evidence type="ECO:0000305" key="9"/>
<evidence type="ECO:0000305" key="10">
    <source>
    </source>
</evidence>
<evidence type="ECO:0007744" key="11">
    <source>
        <dbReference type="PDB" id="1B3R"/>
    </source>
</evidence>
<evidence type="ECO:0007744" key="12">
    <source>
        <dbReference type="PDB" id="1D4F"/>
    </source>
</evidence>
<evidence type="ECO:0007744" key="13">
    <source>
        <dbReference type="PDB" id="1K0U"/>
    </source>
</evidence>
<evidence type="ECO:0007744" key="14">
    <source>
        <dbReference type="PDB" id="1KY4"/>
    </source>
</evidence>
<evidence type="ECO:0007744" key="15">
    <source>
        <dbReference type="PDB" id="1KY5"/>
    </source>
</evidence>
<evidence type="ECO:0007744" key="16">
    <source>
        <dbReference type="PDB" id="1XWF"/>
    </source>
</evidence>
<evidence type="ECO:0007744" key="17">
    <source>
        <dbReference type="PDB" id="2H5L"/>
    </source>
</evidence>
<evidence type="ECO:0007829" key="18">
    <source>
        <dbReference type="PDB" id="1B3R"/>
    </source>
</evidence>
<evidence type="ECO:0007829" key="19">
    <source>
        <dbReference type="PDB" id="1D4F"/>
    </source>
</evidence>
<evidence type="ECO:0007829" key="20">
    <source>
        <dbReference type="PDB" id="1XWF"/>
    </source>
</evidence>
<organism>
    <name type="scientific">Rattus norvegicus</name>
    <name type="common">Rat</name>
    <dbReference type="NCBI Taxonomy" id="10116"/>
    <lineage>
        <taxon>Eukaryota</taxon>
        <taxon>Metazoa</taxon>
        <taxon>Chordata</taxon>
        <taxon>Craniata</taxon>
        <taxon>Vertebrata</taxon>
        <taxon>Euteleostomi</taxon>
        <taxon>Mammalia</taxon>
        <taxon>Eutheria</taxon>
        <taxon>Euarchontoglires</taxon>
        <taxon>Glires</taxon>
        <taxon>Rodentia</taxon>
        <taxon>Myomorpha</taxon>
        <taxon>Muroidea</taxon>
        <taxon>Muridae</taxon>
        <taxon>Murinae</taxon>
        <taxon>Rattus</taxon>
    </lineage>
</organism>